<gene>
    <name type="primary">mrp20</name>
    <name type="ORF">SPAC31A2.08</name>
</gene>
<keyword id="KW-0496">Mitochondrion</keyword>
<keyword id="KW-1185">Reference proteome</keyword>
<keyword id="KW-0687">Ribonucleoprotein</keyword>
<keyword id="KW-0689">Ribosomal protein</keyword>
<keyword id="KW-0809">Transit peptide</keyword>
<organism>
    <name type="scientific">Schizosaccharomyces pombe (strain 972 / ATCC 24843)</name>
    <name type="common">Fission yeast</name>
    <dbReference type="NCBI Taxonomy" id="284812"/>
    <lineage>
        <taxon>Eukaryota</taxon>
        <taxon>Fungi</taxon>
        <taxon>Dikarya</taxon>
        <taxon>Ascomycota</taxon>
        <taxon>Taphrinomycotina</taxon>
        <taxon>Schizosaccharomycetes</taxon>
        <taxon>Schizosaccharomycetales</taxon>
        <taxon>Schizosaccharomycetaceae</taxon>
        <taxon>Schizosaccharomyces</taxon>
    </lineage>
</organism>
<reference key="1">
    <citation type="journal article" date="2002" name="Nature">
        <title>The genome sequence of Schizosaccharomyces pombe.</title>
        <authorList>
            <person name="Wood V."/>
            <person name="Gwilliam R."/>
            <person name="Rajandream M.A."/>
            <person name="Lyne M.H."/>
            <person name="Lyne R."/>
            <person name="Stewart A."/>
            <person name="Sgouros J.G."/>
            <person name="Peat N."/>
            <person name="Hayles J."/>
            <person name="Baker S.G."/>
            <person name="Basham D."/>
            <person name="Bowman S."/>
            <person name="Brooks K."/>
            <person name="Brown D."/>
            <person name="Brown S."/>
            <person name="Chillingworth T."/>
            <person name="Churcher C.M."/>
            <person name="Collins M."/>
            <person name="Connor R."/>
            <person name="Cronin A."/>
            <person name="Davis P."/>
            <person name="Feltwell T."/>
            <person name="Fraser A."/>
            <person name="Gentles S."/>
            <person name="Goble A."/>
            <person name="Hamlin N."/>
            <person name="Harris D.E."/>
            <person name="Hidalgo J."/>
            <person name="Hodgson G."/>
            <person name="Holroyd S."/>
            <person name="Hornsby T."/>
            <person name="Howarth S."/>
            <person name="Huckle E.J."/>
            <person name="Hunt S."/>
            <person name="Jagels K."/>
            <person name="James K.D."/>
            <person name="Jones L."/>
            <person name="Jones M."/>
            <person name="Leather S."/>
            <person name="McDonald S."/>
            <person name="McLean J."/>
            <person name="Mooney P."/>
            <person name="Moule S."/>
            <person name="Mungall K.L."/>
            <person name="Murphy L.D."/>
            <person name="Niblett D."/>
            <person name="Odell C."/>
            <person name="Oliver K."/>
            <person name="O'Neil S."/>
            <person name="Pearson D."/>
            <person name="Quail M.A."/>
            <person name="Rabbinowitsch E."/>
            <person name="Rutherford K.M."/>
            <person name="Rutter S."/>
            <person name="Saunders D."/>
            <person name="Seeger K."/>
            <person name="Sharp S."/>
            <person name="Skelton J."/>
            <person name="Simmonds M.N."/>
            <person name="Squares R."/>
            <person name="Squares S."/>
            <person name="Stevens K."/>
            <person name="Taylor K."/>
            <person name="Taylor R.G."/>
            <person name="Tivey A."/>
            <person name="Walsh S.V."/>
            <person name="Warren T."/>
            <person name="Whitehead S."/>
            <person name="Woodward J.R."/>
            <person name="Volckaert G."/>
            <person name="Aert R."/>
            <person name="Robben J."/>
            <person name="Grymonprez B."/>
            <person name="Weltjens I."/>
            <person name="Vanstreels E."/>
            <person name="Rieger M."/>
            <person name="Schaefer M."/>
            <person name="Mueller-Auer S."/>
            <person name="Gabel C."/>
            <person name="Fuchs M."/>
            <person name="Duesterhoeft A."/>
            <person name="Fritzc C."/>
            <person name="Holzer E."/>
            <person name="Moestl D."/>
            <person name="Hilbert H."/>
            <person name="Borzym K."/>
            <person name="Langer I."/>
            <person name="Beck A."/>
            <person name="Lehrach H."/>
            <person name="Reinhardt R."/>
            <person name="Pohl T.M."/>
            <person name="Eger P."/>
            <person name="Zimmermann W."/>
            <person name="Wedler H."/>
            <person name="Wambutt R."/>
            <person name="Purnelle B."/>
            <person name="Goffeau A."/>
            <person name="Cadieu E."/>
            <person name="Dreano S."/>
            <person name="Gloux S."/>
            <person name="Lelaure V."/>
            <person name="Mottier S."/>
            <person name="Galibert F."/>
            <person name="Aves S.J."/>
            <person name="Xiang Z."/>
            <person name="Hunt C."/>
            <person name="Moore K."/>
            <person name="Hurst S.M."/>
            <person name="Lucas M."/>
            <person name="Rochet M."/>
            <person name="Gaillardin C."/>
            <person name="Tallada V.A."/>
            <person name="Garzon A."/>
            <person name="Thode G."/>
            <person name="Daga R.R."/>
            <person name="Cruzado L."/>
            <person name="Jimenez J."/>
            <person name="Sanchez M."/>
            <person name="del Rey F."/>
            <person name="Benito J."/>
            <person name="Dominguez A."/>
            <person name="Revuelta J.L."/>
            <person name="Moreno S."/>
            <person name="Armstrong J."/>
            <person name="Forsburg S.L."/>
            <person name="Cerutti L."/>
            <person name="Lowe T."/>
            <person name="McCombie W.R."/>
            <person name="Paulsen I."/>
            <person name="Potashkin J."/>
            <person name="Shpakovski G.V."/>
            <person name="Ussery D."/>
            <person name="Barrell B.G."/>
            <person name="Nurse P."/>
        </authorList>
    </citation>
    <scope>NUCLEOTIDE SEQUENCE [LARGE SCALE GENOMIC DNA]</scope>
    <source>
        <strain>972 / ATCC 24843</strain>
    </source>
</reference>
<reference key="2">
    <citation type="journal article" date="2006" name="Nat. Biotechnol.">
        <title>ORFeome cloning and global analysis of protein localization in the fission yeast Schizosaccharomyces pombe.</title>
        <authorList>
            <person name="Matsuyama A."/>
            <person name="Arai R."/>
            <person name="Yashiroda Y."/>
            <person name="Shirai A."/>
            <person name="Kamata A."/>
            <person name="Sekido S."/>
            <person name="Kobayashi Y."/>
            <person name="Hashimoto A."/>
            <person name="Hamamoto M."/>
            <person name="Hiraoka Y."/>
            <person name="Horinouchi S."/>
            <person name="Yoshida M."/>
        </authorList>
    </citation>
    <scope>SUBCELLULAR LOCATION [LARGE SCALE ANALYSIS]</scope>
</reference>
<dbReference type="EMBL" id="CU329670">
    <property type="protein sequence ID" value="CAA90466.1"/>
    <property type="molecule type" value="Genomic_DNA"/>
</dbReference>
<dbReference type="PIR" id="T38606">
    <property type="entry name" value="S58103"/>
</dbReference>
<dbReference type="RefSeq" id="NP_592920.1">
    <property type="nucleotide sequence ID" value="NM_001018321.2"/>
</dbReference>
<dbReference type="SMR" id="Q09727"/>
<dbReference type="BioGRID" id="279473">
    <property type="interactions" value="3"/>
</dbReference>
<dbReference type="ComplexPortal" id="CPX-10323">
    <property type="entry name" value="54S mitochondrial large ribosomal subunit"/>
</dbReference>
<dbReference type="FunCoup" id="Q09727">
    <property type="interactions" value="201"/>
</dbReference>
<dbReference type="STRING" id="284812.Q09727"/>
<dbReference type="iPTMnet" id="Q09727"/>
<dbReference type="PaxDb" id="4896-SPAC31A2.08.1"/>
<dbReference type="EnsemblFungi" id="SPAC31A2.08.1">
    <property type="protein sequence ID" value="SPAC31A2.08.1:pep"/>
    <property type="gene ID" value="SPAC31A2.08"/>
</dbReference>
<dbReference type="GeneID" id="2543038"/>
<dbReference type="KEGG" id="spo:2543038"/>
<dbReference type="PomBase" id="SPAC31A2.08">
    <property type="gene designation" value="mrp20"/>
</dbReference>
<dbReference type="VEuPathDB" id="FungiDB:SPAC31A2.08"/>
<dbReference type="eggNOG" id="KOG4089">
    <property type="taxonomic scope" value="Eukaryota"/>
</dbReference>
<dbReference type="HOGENOM" id="CLU_086423_2_0_1"/>
<dbReference type="InParanoid" id="Q09727"/>
<dbReference type="OMA" id="PFILYRG"/>
<dbReference type="PhylomeDB" id="Q09727"/>
<dbReference type="PRO" id="PR:Q09727"/>
<dbReference type="Proteomes" id="UP000002485">
    <property type="component" value="Chromosome I"/>
</dbReference>
<dbReference type="GO" id="GO:0005762">
    <property type="term" value="C:mitochondrial large ribosomal subunit"/>
    <property type="evidence" value="ECO:0000318"/>
    <property type="project" value="GO_Central"/>
</dbReference>
<dbReference type="GO" id="GO:0005739">
    <property type="term" value="C:mitochondrion"/>
    <property type="evidence" value="ECO:0007005"/>
    <property type="project" value="PomBase"/>
</dbReference>
<dbReference type="GO" id="GO:0003735">
    <property type="term" value="F:structural constituent of ribosome"/>
    <property type="evidence" value="ECO:0000318"/>
    <property type="project" value="GO_Central"/>
</dbReference>
<dbReference type="GO" id="GO:0032543">
    <property type="term" value="P:mitochondrial translation"/>
    <property type="evidence" value="ECO:0000318"/>
    <property type="project" value="GO_Central"/>
</dbReference>
<dbReference type="FunFam" id="3.30.70.330:FF:000687">
    <property type="entry name" value="54S ribosomal protein L23, mitochondrial"/>
    <property type="match status" value="1"/>
</dbReference>
<dbReference type="Gene3D" id="3.30.70.330">
    <property type="match status" value="1"/>
</dbReference>
<dbReference type="InterPro" id="IPR012677">
    <property type="entry name" value="Nucleotide-bd_a/b_plait_sf"/>
</dbReference>
<dbReference type="InterPro" id="IPR013025">
    <property type="entry name" value="Ribosomal_uL23-like"/>
</dbReference>
<dbReference type="InterPro" id="IPR012678">
    <property type="entry name" value="Ribosomal_uL23/eL15/eS24_sf"/>
</dbReference>
<dbReference type="PANTHER" id="PTHR12059:SF5">
    <property type="entry name" value="LARGE RIBOSOMAL SUBUNIT PROTEIN UL23M"/>
    <property type="match status" value="1"/>
</dbReference>
<dbReference type="PANTHER" id="PTHR12059">
    <property type="entry name" value="RIBOSOMAL PROTEIN L23-RELATED"/>
    <property type="match status" value="1"/>
</dbReference>
<dbReference type="Pfam" id="PF00276">
    <property type="entry name" value="Ribosomal_L23"/>
    <property type="match status" value="1"/>
</dbReference>
<dbReference type="SUPFAM" id="SSF54189">
    <property type="entry name" value="Ribosomal proteins S24e, L23 and L15e"/>
    <property type="match status" value="1"/>
</dbReference>
<sequence>MSKIAGKRLVYFPNITFTLCRGLNLQPKFAVFRVPLHVNKFDVRDYLQHVYNLKVVSVKSRIYQGKLFRNQLGQVKRPQSEKRVIVEMEEPFVYPNAPNDLKDWQEGELLPDGSNVKTLSRYPKVLEQVDMKRVNEELSKLQDKQILESQQKIARLLKKKY</sequence>
<accession>Q09727</accession>
<evidence type="ECO:0000250" key="1">
    <source>
        <dbReference type="UniProtKB" id="P32387"/>
    </source>
</evidence>
<evidence type="ECO:0000255" key="2"/>
<evidence type="ECO:0000269" key="3">
    <source>
    </source>
</evidence>
<evidence type="ECO:0000305" key="4"/>
<protein>
    <recommendedName>
        <fullName evidence="4">Large ribosomal subunit protein uL23m</fullName>
    </recommendedName>
    <alternativeName>
        <fullName>54S ribosomal protein L23, mitochondrial</fullName>
    </alternativeName>
</protein>
<proteinExistence type="inferred from homology"/>
<comment type="function">
    <text evidence="1">Component of the mitochondrial ribosome (mitoribosome), a dedicated translation machinery responsible for the synthesis of mitochondrial genome-encoded proteins, including at least some of the essential transmembrane subunits of the mitochondrial respiratory chain. The mitoribosomes are attached to the mitochondrial inner membrane and translation products are cotranslationally integrated into the membrane.</text>
</comment>
<comment type="subunit">
    <text evidence="1">Component of the mitochondrial large ribosomal subunit (mt-LSU). Mature yeast 74S mitochondrial ribosomes consist of a small (37S) and a large (54S) subunit. The 37S small subunit contains a 15S ribosomal RNA (15S mt-rRNA) and at least 32 different proteins. The 54S large subunit contains a 21S rRNA (21S mt-rRNA) and at least 45 different proteins. uL23m forms the wall of the exit tunnel. Interacts with the C-terminus of OXA1.</text>
</comment>
<comment type="subcellular location">
    <subcellularLocation>
        <location evidence="3">Mitochondrion</location>
    </subcellularLocation>
</comment>
<comment type="similarity">
    <text evidence="4">Belongs to the universal ribosomal protein uL23 family.</text>
</comment>
<name>MRP20_SCHPO</name>
<feature type="transit peptide" description="Mitochondrion" evidence="2">
    <location>
        <begin position="1"/>
        <end position="34"/>
    </location>
</feature>
<feature type="chain" id="PRO_0000129492" description="Large ribosomal subunit protein uL23m">
    <location>
        <begin position="35"/>
        <end position="161"/>
    </location>
</feature>